<protein>
    <recommendedName>
        <fullName evidence="1">Large ribosomal subunit protein uL1</fullName>
    </recommendedName>
    <alternativeName>
        <fullName evidence="2">50S ribosomal protein L1</fullName>
    </alternativeName>
</protein>
<feature type="chain" id="PRO_0000125610" description="Large ribosomal subunit protein uL1">
    <location>
        <begin position="1"/>
        <end position="230"/>
    </location>
</feature>
<accession>Q63HA2</accession>
<organism>
    <name type="scientific">Bacillus cereus (strain ZK / E33L)</name>
    <dbReference type="NCBI Taxonomy" id="288681"/>
    <lineage>
        <taxon>Bacteria</taxon>
        <taxon>Bacillati</taxon>
        <taxon>Bacillota</taxon>
        <taxon>Bacilli</taxon>
        <taxon>Bacillales</taxon>
        <taxon>Bacillaceae</taxon>
        <taxon>Bacillus</taxon>
        <taxon>Bacillus cereus group</taxon>
    </lineage>
</organism>
<keyword id="KW-0678">Repressor</keyword>
<keyword id="KW-0687">Ribonucleoprotein</keyword>
<keyword id="KW-0689">Ribosomal protein</keyword>
<keyword id="KW-0694">RNA-binding</keyword>
<keyword id="KW-0699">rRNA-binding</keyword>
<keyword id="KW-0810">Translation regulation</keyword>
<keyword id="KW-0820">tRNA-binding</keyword>
<proteinExistence type="inferred from homology"/>
<reference key="1">
    <citation type="journal article" date="2006" name="J. Bacteriol.">
        <title>Pathogenomic sequence analysis of Bacillus cereus and Bacillus thuringiensis isolates closely related to Bacillus anthracis.</title>
        <authorList>
            <person name="Han C.S."/>
            <person name="Xie G."/>
            <person name="Challacombe J.F."/>
            <person name="Altherr M.R."/>
            <person name="Bhotika S.S."/>
            <person name="Bruce D."/>
            <person name="Campbell C.S."/>
            <person name="Campbell M.L."/>
            <person name="Chen J."/>
            <person name="Chertkov O."/>
            <person name="Cleland C."/>
            <person name="Dimitrijevic M."/>
            <person name="Doggett N.A."/>
            <person name="Fawcett J.J."/>
            <person name="Glavina T."/>
            <person name="Goodwin L.A."/>
            <person name="Hill K.K."/>
            <person name="Hitchcock P."/>
            <person name="Jackson P.J."/>
            <person name="Keim P."/>
            <person name="Kewalramani A.R."/>
            <person name="Longmire J."/>
            <person name="Lucas S."/>
            <person name="Malfatti S."/>
            <person name="McMurry K."/>
            <person name="Meincke L.J."/>
            <person name="Misra M."/>
            <person name="Moseman B.L."/>
            <person name="Mundt M."/>
            <person name="Munk A.C."/>
            <person name="Okinaka R.T."/>
            <person name="Parson-Quintana B."/>
            <person name="Reilly L.P."/>
            <person name="Richardson P."/>
            <person name="Robinson D.L."/>
            <person name="Rubin E."/>
            <person name="Saunders E."/>
            <person name="Tapia R."/>
            <person name="Tesmer J.G."/>
            <person name="Thayer N."/>
            <person name="Thompson L.S."/>
            <person name="Tice H."/>
            <person name="Ticknor L.O."/>
            <person name="Wills P.L."/>
            <person name="Brettin T.S."/>
            <person name="Gilna P."/>
        </authorList>
    </citation>
    <scope>NUCLEOTIDE SEQUENCE [LARGE SCALE GENOMIC DNA]</scope>
    <source>
        <strain>ZK / E33L</strain>
    </source>
</reference>
<evidence type="ECO:0000255" key="1">
    <source>
        <dbReference type="HAMAP-Rule" id="MF_01318"/>
    </source>
</evidence>
<evidence type="ECO:0000305" key="2"/>
<sequence>MAKRGKKYVEAAKLVDRAAAYSATEAVELVKKTNTAKFDATVEAAFRLGVDPKKADQQIRGAVVLPHGTGKVQRVLVFAKGEKAKEAEAAGADFVGDADYIGKIQQGWFDFDVVVATPDMMGEVGKLGRVLGPKGLMPNPKTGTVTFDVTKAVNEIKAGKVEYRVDKAGNIHVPIGKVSFEDAKLVENFRTIADTLQKVKPAAAKGTYMKNVTVASTMGPGVRVDVSTLA</sequence>
<name>RL1_BACCZ</name>
<gene>
    <name evidence="1" type="primary">rplA</name>
    <name type="ordered locus">BCE33L0092</name>
</gene>
<comment type="function">
    <text evidence="1">Binds directly to 23S rRNA. The L1 stalk is quite mobile in the ribosome, and is involved in E site tRNA release.</text>
</comment>
<comment type="function">
    <text evidence="1">Protein L1 is also a translational repressor protein, it controls the translation of the L11 operon by binding to its mRNA.</text>
</comment>
<comment type="subunit">
    <text evidence="1">Part of the 50S ribosomal subunit.</text>
</comment>
<comment type="similarity">
    <text evidence="1">Belongs to the universal ribosomal protein uL1 family.</text>
</comment>
<dbReference type="EMBL" id="CP000001">
    <property type="protein sequence ID" value="AAU20139.1"/>
    <property type="molecule type" value="Genomic_DNA"/>
</dbReference>
<dbReference type="RefSeq" id="WP_002020168.1">
    <property type="nucleotide sequence ID" value="NZ_CP009968.1"/>
</dbReference>
<dbReference type="SMR" id="Q63HA2"/>
<dbReference type="GeneID" id="93010955"/>
<dbReference type="KEGG" id="bcz:BCE33L0092"/>
<dbReference type="PATRIC" id="fig|288681.22.peg.59"/>
<dbReference type="Proteomes" id="UP000002612">
    <property type="component" value="Chromosome"/>
</dbReference>
<dbReference type="GO" id="GO:0015934">
    <property type="term" value="C:large ribosomal subunit"/>
    <property type="evidence" value="ECO:0007669"/>
    <property type="project" value="InterPro"/>
</dbReference>
<dbReference type="GO" id="GO:0019843">
    <property type="term" value="F:rRNA binding"/>
    <property type="evidence" value="ECO:0007669"/>
    <property type="project" value="UniProtKB-UniRule"/>
</dbReference>
<dbReference type="GO" id="GO:0003735">
    <property type="term" value="F:structural constituent of ribosome"/>
    <property type="evidence" value="ECO:0007669"/>
    <property type="project" value="InterPro"/>
</dbReference>
<dbReference type="GO" id="GO:0000049">
    <property type="term" value="F:tRNA binding"/>
    <property type="evidence" value="ECO:0007669"/>
    <property type="project" value="UniProtKB-KW"/>
</dbReference>
<dbReference type="GO" id="GO:0006417">
    <property type="term" value="P:regulation of translation"/>
    <property type="evidence" value="ECO:0007669"/>
    <property type="project" value="UniProtKB-KW"/>
</dbReference>
<dbReference type="GO" id="GO:0006412">
    <property type="term" value="P:translation"/>
    <property type="evidence" value="ECO:0007669"/>
    <property type="project" value="UniProtKB-UniRule"/>
</dbReference>
<dbReference type="CDD" id="cd00403">
    <property type="entry name" value="Ribosomal_L1"/>
    <property type="match status" value="1"/>
</dbReference>
<dbReference type="FunFam" id="3.40.50.790:FF:000001">
    <property type="entry name" value="50S ribosomal protein L1"/>
    <property type="match status" value="1"/>
</dbReference>
<dbReference type="Gene3D" id="3.30.190.20">
    <property type="match status" value="1"/>
</dbReference>
<dbReference type="Gene3D" id="3.40.50.790">
    <property type="match status" value="1"/>
</dbReference>
<dbReference type="HAMAP" id="MF_01318_B">
    <property type="entry name" value="Ribosomal_uL1_B"/>
    <property type="match status" value="1"/>
</dbReference>
<dbReference type="InterPro" id="IPR005878">
    <property type="entry name" value="Ribosom_uL1_bac-type"/>
</dbReference>
<dbReference type="InterPro" id="IPR002143">
    <property type="entry name" value="Ribosomal_uL1"/>
</dbReference>
<dbReference type="InterPro" id="IPR023674">
    <property type="entry name" value="Ribosomal_uL1-like"/>
</dbReference>
<dbReference type="InterPro" id="IPR028364">
    <property type="entry name" value="Ribosomal_uL1/biogenesis"/>
</dbReference>
<dbReference type="InterPro" id="IPR016095">
    <property type="entry name" value="Ribosomal_uL1_3-a/b-sand"/>
</dbReference>
<dbReference type="InterPro" id="IPR023673">
    <property type="entry name" value="Ribosomal_uL1_CS"/>
</dbReference>
<dbReference type="NCBIfam" id="TIGR01169">
    <property type="entry name" value="rplA_bact"/>
    <property type="match status" value="1"/>
</dbReference>
<dbReference type="PANTHER" id="PTHR36427">
    <property type="entry name" value="54S RIBOSOMAL PROTEIN L1, MITOCHONDRIAL"/>
    <property type="match status" value="1"/>
</dbReference>
<dbReference type="PANTHER" id="PTHR36427:SF3">
    <property type="entry name" value="LARGE RIBOSOMAL SUBUNIT PROTEIN UL1M"/>
    <property type="match status" value="1"/>
</dbReference>
<dbReference type="Pfam" id="PF00687">
    <property type="entry name" value="Ribosomal_L1"/>
    <property type="match status" value="1"/>
</dbReference>
<dbReference type="PIRSF" id="PIRSF002155">
    <property type="entry name" value="Ribosomal_L1"/>
    <property type="match status" value="1"/>
</dbReference>
<dbReference type="SUPFAM" id="SSF56808">
    <property type="entry name" value="Ribosomal protein L1"/>
    <property type="match status" value="1"/>
</dbReference>
<dbReference type="PROSITE" id="PS01199">
    <property type="entry name" value="RIBOSOMAL_L1"/>
    <property type="match status" value="1"/>
</dbReference>